<feature type="chain" id="PRO_0000163732" description="1-deoxy-D-xylulose 5-phosphate reductoisomerase">
    <location>
        <begin position="1"/>
        <end position="401"/>
    </location>
</feature>
<feature type="binding site" evidence="1">
    <location>
        <position position="10"/>
    </location>
    <ligand>
        <name>NADPH</name>
        <dbReference type="ChEBI" id="CHEBI:57783"/>
    </ligand>
</feature>
<feature type="binding site" evidence="1">
    <location>
        <position position="11"/>
    </location>
    <ligand>
        <name>NADPH</name>
        <dbReference type="ChEBI" id="CHEBI:57783"/>
    </ligand>
</feature>
<feature type="binding site" evidence="1">
    <location>
        <position position="12"/>
    </location>
    <ligand>
        <name>NADPH</name>
        <dbReference type="ChEBI" id="CHEBI:57783"/>
    </ligand>
</feature>
<feature type="binding site" evidence="1">
    <location>
        <position position="13"/>
    </location>
    <ligand>
        <name>NADPH</name>
        <dbReference type="ChEBI" id="CHEBI:57783"/>
    </ligand>
</feature>
<feature type="binding site" evidence="1">
    <location>
        <position position="36"/>
    </location>
    <ligand>
        <name>NADPH</name>
        <dbReference type="ChEBI" id="CHEBI:57783"/>
    </ligand>
</feature>
<feature type="binding site" evidence="1">
    <location>
        <position position="38"/>
    </location>
    <ligand>
        <name>NADPH</name>
        <dbReference type="ChEBI" id="CHEBI:57783"/>
    </ligand>
</feature>
<feature type="binding site" evidence="1">
    <location>
        <position position="124"/>
    </location>
    <ligand>
        <name>NADPH</name>
        <dbReference type="ChEBI" id="CHEBI:57783"/>
    </ligand>
</feature>
<feature type="binding site" evidence="1">
    <location>
        <position position="125"/>
    </location>
    <ligand>
        <name>1-deoxy-D-xylulose 5-phosphate</name>
        <dbReference type="ChEBI" id="CHEBI:57792"/>
    </ligand>
</feature>
<feature type="binding site" evidence="1">
    <location>
        <position position="126"/>
    </location>
    <ligand>
        <name>NADPH</name>
        <dbReference type="ChEBI" id="CHEBI:57783"/>
    </ligand>
</feature>
<feature type="binding site" evidence="1">
    <location>
        <position position="150"/>
    </location>
    <ligand>
        <name>Mn(2+)</name>
        <dbReference type="ChEBI" id="CHEBI:29035"/>
    </ligand>
</feature>
<feature type="binding site" evidence="1">
    <location>
        <position position="151"/>
    </location>
    <ligand>
        <name>1-deoxy-D-xylulose 5-phosphate</name>
        <dbReference type="ChEBI" id="CHEBI:57792"/>
    </ligand>
</feature>
<feature type="binding site" evidence="1">
    <location>
        <position position="152"/>
    </location>
    <ligand>
        <name>1-deoxy-D-xylulose 5-phosphate</name>
        <dbReference type="ChEBI" id="CHEBI:57792"/>
    </ligand>
</feature>
<feature type="binding site" evidence="1">
    <location>
        <position position="152"/>
    </location>
    <ligand>
        <name>Mn(2+)</name>
        <dbReference type="ChEBI" id="CHEBI:29035"/>
    </ligand>
</feature>
<feature type="binding site" evidence="1">
    <location>
        <position position="186"/>
    </location>
    <ligand>
        <name>1-deoxy-D-xylulose 5-phosphate</name>
        <dbReference type="ChEBI" id="CHEBI:57792"/>
    </ligand>
</feature>
<feature type="binding site" evidence="1">
    <location>
        <position position="209"/>
    </location>
    <ligand>
        <name>1-deoxy-D-xylulose 5-phosphate</name>
        <dbReference type="ChEBI" id="CHEBI:57792"/>
    </ligand>
</feature>
<feature type="binding site" evidence="1">
    <location>
        <position position="215"/>
    </location>
    <ligand>
        <name>NADPH</name>
        <dbReference type="ChEBI" id="CHEBI:57783"/>
    </ligand>
</feature>
<feature type="binding site" evidence="1">
    <location>
        <position position="222"/>
    </location>
    <ligand>
        <name>1-deoxy-D-xylulose 5-phosphate</name>
        <dbReference type="ChEBI" id="CHEBI:57792"/>
    </ligand>
</feature>
<feature type="binding site" evidence="1">
    <location>
        <position position="227"/>
    </location>
    <ligand>
        <name>1-deoxy-D-xylulose 5-phosphate</name>
        <dbReference type="ChEBI" id="CHEBI:57792"/>
    </ligand>
</feature>
<feature type="binding site" evidence="1">
    <location>
        <position position="228"/>
    </location>
    <ligand>
        <name>1-deoxy-D-xylulose 5-phosphate</name>
        <dbReference type="ChEBI" id="CHEBI:57792"/>
    </ligand>
</feature>
<feature type="binding site" evidence="1">
    <location>
        <position position="231"/>
    </location>
    <ligand>
        <name>1-deoxy-D-xylulose 5-phosphate</name>
        <dbReference type="ChEBI" id="CHEBI:57792"/>
    </ligand>
</feature>
<feature type="binding site" evidence="1">
    <location>
        <position position="231"/>
    </location>
    <ligand>
        <name>Mn(2+)</name>
        <dbReference type="ChEBI" id="CHEBI:29035"/>
    </ligand>
</feature>
<accession>Q87ME3</accession>
<gene>
    <name evidence="1" type="primary">dxr</name>
    <name type="ordered locus">VP2312</name>
</gene>
<dbReference type="EC" id="1.1.1.267" evidence="1"/>
<dbReference type="EMBL" id="BA000031">
    <property type="protein sequence ID" value="BAC60575.1"/>
    <property type="molecule type" value="Genomic_DNA"/>
</dbReference>
<dbReference type="RefSeq" id="NP_798691.1">
    <property type="nucleotide sequence ID" value="NC_004603.1"/>
</dbReference>
<dbReference type="SMR" id="Q87ME3"/>
<dbReference type="GeneID" id="1189825"/>
<dbReference type="KEGG" id="vpa:VP2312"/>
<dbReference type="PATRIC" id="fig|223926.6.peg.2214"/>
<dbReference type="eggNOG" id="COG0743">
    <property type="taxonomic scope" value="Bacteria"/>
</dbReference>
<dbReference type="HOGENOM" id="CLU_035714_4_0_6"/>
<dbReference type="UniPathway" id="UPA00056">
    <property type="reaction ID" value="UER00092"/>
</dbReference>
<dbReference type="Proteomes" id="UP000002493">
    <property type="component" value="Chromosome 1"/>
</dbReference>
<dbReference type="GO" id="GO:0030604">
    <property type="term" value="F:1-deoxy-D-xylulose-5-phosphate reductoisomerase activity"/>
    <property type="evidence" value="ECO:0007669"/>
    <property type="project" value="UniProtKB-UniRule"/>
</dbReference>
<dbReference type="GO" id="GO:0030145">
    <property type="term" value="F:manganese ion binding"/>
    <property type="evidence" value="ECO:0007669"/>
    <property type="project" value="TreeGrafter"/>
</dbReference>
<dbReference type="GO" id="GO:0070402">
    <property type="term" value="F:NADPH binding"/>
    <property type="evidence" value="ECO:0007669"/>
    <property type="project" value="InterPro"/>
</dbReference>
<dbReference type="GO" id="GO:0051484">
    <property type="term" value="P:isopentenyl diphosphate biosynthetic process, methylerythritol 4-phosphate pathway involved in terpenoid biosynthetic process"/>
    <property type="evidence" value="ECO:0007669"/>
    <property type="project" value="TreeGrafter"/>
</dbReference>
<dbReference type="FunFam" id="1.10.1740.10:FF:000004">
    <property type="entry name" value="1-deoxy-D-xylulose 5-phosphate reductoisomerase"/>
    <property type="match status" value="1"/>
</dbReference>
<dbReference type="FunFam" id="3.40.50.720:FF:000045">
    <property type="entry name" value="1-deoxy-D-xylulose 5-phosphate reductoisomerase"/>
    <property type="match status" value="1"/>
</dbReference>
<dbReference type="Gene3D" id="1.10.1740.10">
    <property type="match status" value="1"/>
</dbReference>
<dbReference type="Gene3D" id="3.40.50.720">
    <property type="entry name" value="NAD(P)-binding Rossmann-like Domain"/>
    <property type="match status" value="1"/>
</dbReference>
<dbReference type="HAMAP" id="MF_00183">
    <property type="entry name" value="DXP_reductoisom"/>
    <property type="match status" value="1"/>
</dbReference>
<dbReference type="InterPro" id="IPR003821">
    <property type="entry name" value="DXP_reductoisomerase"/>
</dbReference>
<dbReference type="InterPro" id="IPR013644">
    <property type="entry name" value="DXP_reductoisomerase_C"/>
</dbReference>
<dbReference type="InterPro" id="IPR013512">
    <property type="entry name" value="DXP_reductoisomerase_N"/>
</dbReference>
<dbReference type="InterPro" id="IPR026877">
    <property type="entry name" value="DXPR_C"/>
</dbReference>
<dbReference type="InterPro" id="IPR036169">
    <property type="entry name" value="DXPR_C_sf"/>
</dbReference>
<dbReference type="InterPro" id="IPR036291">
    <property type="entry name" value="NAD(P)-bd_dom_sf"/>
</dbReference>
<dbReference type="NCBIfam" id="TIGR00243">
    <property type="entry name" value="Dxr"/>
    <property type="match status" value="1"/>
</dbReference>
<dbReference type="NCBIfam" id="NF003938">
    <property type="entry name" value="PRK05447.1-1"/>
    <property type="match status" value="1"/>
</dbReference>
<dbReference type="NCBIfam" id="NF009114">
    <property type="entry name" value="PRK12464.1"/>
    <property type="match status" value="1"/>
</dbReference>
<dbReference type="PANTHER" id="PTHR30525">
    <property type="entry name" value="1-DEOXY-D-XYLULOSE 5-PHOSPHATE REDUCTOISOMERASE"/>
    <property type="match status" value="1"/>
</dbReference>
<dbReference type="PANTHER" id="PTHR30525:SF0">
    <property type="entry name" value="1-DEOXY-D-XYLULOSE 5-PHOSPHATE REDUCTOISOMERASE, CHLOROPLASTIC"/>
    <property type="match status" value="1"/>
</dbReference>
<dbReference type="Pfam" id="PF08436">
    <property type="entry name" value="DXP_redisom_C"/>
    <property type="match status" value="1"/>
</dbReference>
<dbReference type="Pfam" id="PF02670">
    <property type="entry name" value="DXP_reductoisom"/>
    <property type="match status" value="1"/>
</dbReference>
<dbReference type="Pfam" id="PF13288">
    <property type="entry name" value="DXPR_C"/>
    <property type="match status" value="1"/>
</dbReference>
<dbReference type="PIRSF" id="PIRSF006205">
    <property type="entry name" value="Dxp_reductismrs"/>
    <property type="match status" value="1"/>
</dbReference>
<dbReference type="SUPFAM" id="SSF69055">
    <property type="entry name" value="1-deoxy-D-xylulose-5-phosphate reductoisomerase, C-terminal domain"/>
    <property type="match status" value="1"/>
</dbReference>
<dbReference type="SUPFAM" id="SSF55347">
    <property type="entry name" value="Glyceraldehyde-3-phosphate dehydrogenase-like, C-terminal domain"/>
    <property type="match status" value="1"/>
</dbReference>
<dbReference type="SUPFAM" id="SSF51735">
    <property type="entry name" value="NAD(P)-binding Rossmann-fold domains"/>
    <property type="match status" value="1"/>
</dbReference>
<name>DXR_VIBPA</name>
<sequence>MQKLTILGATGSIGASTLKVVEQNPELFSVVALAAGTNVEKMVALCRQWQPKFAVMADKAAAVALQSEIHTISPNTEVLGGVDALCHVASLEEVDSVMAAIVGAAGLLPTMAAVKAGKRVLLANKEALVMSGQLFIDAVEQYGAELLPVDSEHNAIFQCLPQQVQTNLGRCNLDEHGISSILLTGSGGPFRYADIADLDSVTPAQAIAHPNWSMGPKISVDSATMMNKGLEYIEAKWLFNAARDQLKVIIHPQSVIHSMVQYRDGSVLAQMGEPDMATPIALTMSYPSRVDAGVKPLDFTQVGELTFLQPDFARYPCLKLAIDACYEGQHATTALNAANEVAVDAFLNNRLGFTDIARINELVLHKITASCKPENANSLESLLELDRMSRTIALEIIRERS</sequence>
<reference key="1">
    <citation type="journal article" date="2003" name="Lancet">
        <title>Genome sequence of Vibrio parahaemolyticus: a pathogenic mechanism distinct from that of V. cholerae.</title>
        <authorList>
            <person name="Makino K."/>
            <person name="Oshima K."/>
            <person name="Kurokawa K."/>
            <person name="Yokoyama K."/>
            <person name="Uda T."/>
            <person name="Tagomori K."/>
            <person name="Iijima Y."/>
            <person name="Najima M."/>
            <person name="Nakano M."/>
            <person name="Yamashita A."/>
            <person name="Kubota Y."/>
            <person name="Kimura S."/>
            <person name="Yasunaga T."/>
            <person name="Honda T."/>
            <person name="Shinagawa H."/>
            <person name="Hattori M."/>
            <person name="Iida T."/>
        </authorList>
    </citation>
    <scope>NUCLEOTIDE SEQUENCE [LARGE SCALE GENOMIC DNA]</scope>
    <source>
        <strain>RIMD 2210633</strain>
    </source>
</reference>
<comment type="function">
    <text evidence="1">Catalyzes the NADPH-dependent rearrangement and reduction of 1-deoxy-D-xylulose-5-phosphate (DXP) to 2-C-methyl-D-erythritol 4-phosphate (MEP).</text>
</comment>
<comment type="catalytic activity">
    <reaction evidence="1">
        <text>2-C-methyl-D-erythritol 4-phosphate + NADP(+) = 1-deoxy-D-xylulose 5-phosphate + NADPH + H(+)</text>
        <dbReference type="Rhea" id="RHEA:13717"/>
        <dbReference type="ChEBI" id="CHEBI:15378"/>
        <dbReference type="ChEBI" id="CHEBI:57783"/>
        <dbReference type="ChEBI" id="CHEBI:57792"/>
        <dbReference type="ChEBI" id="CHEBI:58262"/>
        <dbReference type="ChEBI" id="CHEBI:58349"/>
        <dbReference type="EC" id="1.1.1.267"/>
    </reaction>
    <physiologicalReaction direction="right-to-left" evidence="1">
        <dbReference type="Rhea" id="RHEA:13719"/>
    </physiologicalReaction>
</comment>
<comment type="cofactor">
    <cofactor evidence="1">
        <name>Mg(2+)</name>
        <dbReference type="ChEBI" id="CHEBI:18420"/>
    </cofactor>
    <cofactor evidence="1">
        <name>Mn(2+)</name>
        <dbReference type="ChEBI" id="CHEBI:29035"/>
    </cofactor>
</comment>
<comment type="pathway">
    <text evidence="1">Isoprenoid biosynthesis; isopentenyl diphosphate biosynthesis via DXP pathway; isopentenyl diphosphate from 1-deoxy-D-xylulose 5-phosphate: step 1/6.</text>
</comment>
<comment type="similarity">
    <text evidence="1">Belongs to the DXR family.</text>
</comment>
<organism>
    <name type="scientific">Vibrio parahaemolyticus serotype O3:K6 (strain RIMD 2210633)</name>
    <dbReference type="NCBI Taxonomy" id="223926"/>
    <lineage>
        <taxon>Bacteria</taxon>
        <taxon>Pseudomonadati</taxon>
        <taxon>Pseudomonadota</taxon>
        <taxon>Gammaproteobacteria</taxon>
        <taxon>Vibrionales</taxon>
        <taxon>Vibrionaceae</taxon>
        <taxon>Vibrio</taxon>
    </lineage>
</organism>
<proteinExistence type="inferred from homology"/>
<protein>
    <recommendedName>
        <fullName evidence="1">1-deoxy-D-xylulose 5-phosphate reductoisomerase</fullName>
        <shortName evidence="1">DXP reductoisomerase</shortName>
        <ecNumber evidence="1">1.1.1.267</ecNumber>
    </recommendedName>
    <alternativeName>
        <fullName evidence="1">1-deoxyxylulose-5-phosphate reductoisomerase</fullName>
    </alternativeName>
    <alternativeName>
        <fullName evidence="1">2-C-methyl-D-erythritol 4-phosphate synthase</fullName>
    </alternativeName>
</protein>
<keyword id="KW-0414">Isoprene biosynthesis</keyword>
<keyword id="KW-0464">Manganese</keyword>
<keyword id="KW-0479">Metal-binding</keyword>
<keyword id="KW-0521">NADP</keyword>
<keyword id="KW-0560">Oxidoreductase</keyword>
<evidence type="ECO:0000255" key="1">
    <source>
        <dbReference type="HAMAP-Rule" id="MF_00183"/>
    </source>
</evidence>